<organism>
    <name type="scientific">Actinobacillus pleuropneumoniae serotype 5b (strain L20)</name>
    <dbReference type="NCBI Taxonomy" id="416269"/>
    <lineage>
        <taxon>Bacteria</taxon>
        <taxon>Pseudomonadati</taxon>
        <taxon>Pseudomonadota</taxon>
        <taxon>Gammaproteobacteria</taxon>
        <taxon>Pasteurellales</taxon>
        <taxon>Pasteurellaceae</taxon>
        <taxon>Actinobacillus</taxon>
    </lineage>
</organism>
<reference key="1">
    <citation type="journal article" date="2008" name="J. Bacteriol.">
        <title>The complete genome sequence of Actinobacillus pleuropneumoniae L20 (serotype 5b).</title>
        <authorList>
            <person name="Foote S.J."/>
            <person name="Bosse J.T."/>
            <person name="Bouevitch A.B."/>
            <person name="Langford P.R."/>
            <person name="Young N.M."/>
            <person name="Nash J.H.E."/>
        </authorList>
    </citation>
    <scope>NUCLEOTIDE SEQUENCE [LARGE SCALE GENOMIC DNA]</scope>
    <source>
        <strain>L20</strain>
    </source>
</reference>
<accession>A3N246</accession>
<comment type="function">
    <text evidence="2">GTP hydrolase that promotes the GTP-dependent binding of aminoacyl-tRNA to the A-site of ribosomes during protein biosynthesis.</text>
</comment>
<comment type="catalytic activity">
    <reaction evidence="2">
        <text>GTP + H2O = GDP + phosphate + H(+)</text>
        <dbReference type="Rhea" id="RHEA:19669"/>
        <dbReference type="ChEBI" id="CHEBI:15377"/>
        <dbReference type="ChEBI" id="CHEBI:15378"/>
        <dbReference type="ChEBI" id="CHEBI:37565"/>
        <dbReference type="ChEBI" id="CHEBI:43474"/>
        <dbReference type="ChEBI" id="CHEBI:58189"/>
        <dbReference type="EC" id="3.6.5.3"/>
    </reaction>
    <physiologicalReaction direction="left-to-right" evidence="2">
        <dbReference type="Rhea" id="RHEA:19670"/>
    </physiologicalReaction>
</comment>
<comment type="subunit">
    <text evidence="2">Monomer.</text>
</comment>
<comment type="subcellular location">
    <subcellularLocation>
        <location evidence="2">Cytoplasm</location>
    </subcellularLocation>
</comment>
<comment type="similarity">
    <text evidence="2">Belongs to the TRAFAC class translation factor GTPase superfamily. Classic translation factor GTPase family. EF-Tu/EF-1A subfamily.</text>
</comment>
<dbReference type="EC" id="3.6.5.3" evidence="2"/>
<dbReference type="EMBL" id="CP000569">
    <property type="protein sequence ID" value="ABN74482.1"/>
    <property type="molecule type" value="Genomic_DNA"/>
</dbReference>
<dbReference type="EMBL" id="CP000569">
    <property type="protein sequence ID" value="ABN74596.1"/>
    <property type="molecule type" value="Genomic_DNA"/>
</dbReference>
<dbReference type="SMR" id="A3N246"/>
<dbReference type="STRING" id="416269.APL_1398"/>
<dbReference type="EnsemblBacteria" id="ABN74482">
    <property type="protein sequence ID" value="ABN74482"/>
    <property type="gene ID" value="APL_1398"/>
</dbReference>
<dbReference type="EnsemblBacteria" id="ABN74596">
    <property type="protein sequence ID" value="ABN74596"/>
    <property type="gene ID" value="APL_1512"/>
</dbReference>
<dbReference type="KEGG" id="apl:APL_1398"/>
<dbReference type="KEGG" id="apl:APL_1512"/>
<dbReference type="eggNOG" id="COG0050">
    <property type="taxonomic scope" value="Bacteria"/>
</dbReference>
<dbReference type="HOGENOM" id="CLU_007265_0_2_6"/>
<dbReference type="Proteomes" id="UP000001432">
    <property type="component" value="Chromosome"/>
</dbReference>
<dbReference type="GO" id="GO:0005829">
    <property type="term" value="C:cytosol"/>
    <property type="evidence" value="ECO:0007669"/>
    <property type="project" value="TreeGrafter"/>
</dbReference>
<dbReference type="GO" id="GO:0005525">
    <property type="term" value="F:GTP binding"/>
    <property type="evidence" value="ECO:0007669"/>
    <property type="project" value="UniProtKB-UniRule"/>
</dbReference>
<dbReference type="GO" id="GO:0003924">
    <property type="term" value="F:GTPase activity"/>
    <property type="evidence" value="ECO:0007669"/>
    <property type="project" value="InterPro"/>
</dbReference>
<dbReference type="GO" id="GO:0097216">
    <property type="term" value="F:guanosine tetraphosphate binding"/>
    <property type="evidence" value="ECO:0007669"/>
    <property type="project" value="UniProtKB-ARBA"/>
</dbReference>
<dbReference type="GO" id="GO:0003746">
    <property type="term" value="F:translation elongation factor activity"/>
    <property type="evidence" value="ECO:0007669"/>
    <property type="project" value="UniProtKB-UniRule"/>
</dbReference>
<dbReference type="CDD" id="cd01884">
    <property type="entry name" value="EF_Tu"/>
    <property type="match status" value="1"/>
</dbReference>
<dbReference type="CDD" id="cd03697">
    <property type="entry name" value="EFTU_II"/>
    <property type="match status" value="1"/>
</dbReference>
<dbReference type="CDD" id="cd03707">
    <property type="entry name" value="EFTU_III"/>
    <property type="match status" value="1"/>
</dbReference>
<dbReference type="FunFam" id="2.40.30.10:FF:000001">
    <property type="entry name" value="Elongation factor Tu"/>
    <property type="match status" value="1"/>
</dbReference>
<dbReference type="FunFam" id="3.40.50.300:FF:000003">
    <property type="entry name" value="Elongation factor Tu"/>
    <property type="match status" value="1"/>
</dbReference>
<dbReference type="Gene3D" id="3.40.50.300">
    <property type="entry name" value="P-loop containing nucleotide triphosphate hydrolases"/>
    <property type="match status" value="1"/>
</dbReference>
<dbReference type="Gene3D" id="2.40.30.10">
    <property type="entry name" value="Translation factors"/>
    <property type="match status" value="2"/>
</dbReference>
<dbReference type="HAMAP" id="MF_00118_B">
    <property type="entry name" value="EF_Tu_B"/>
    <property type="match status" value="1"/>
</dbReference>
<dbReference type="InterPro" id="IPR041709">
    <property type="entry name" value="EF-Tu_GTP-bd"/>
</dbReference>
<dbReference type="InterPro" id="IPR050055">
    <property type="entry name" value="EF-Tu_GTPase"/>
</dbReference>
<dbReference type="InterPro" id="IPR004161">
    <property type="entry name" value="EFTu-like_2"/>
</dbReference>
<dbReference type="InterPro" id="IPR033720">
    <property type="entry name" value="EFTU_2"/>
</dbReference>
<dbReference type="InterPro" id="IPR031157">
    <property type="entry name" value="G_TR_CS"/>
</dbReference>
<dbReference type="InterPro" id="IPR027417">
    <property type="entry name" value="P-loop_NTPase"/>
</dbReference>
<dbReference type="InterPro" id="IPR005225">
    <property type="entry name" value="Small_GTP-bd"/>
</dbReference>
<dbReference type="InterPro" id="IPR000795">
    <property type="entry name" value="T_Tr_GTP-bd_dom"/>
</dbReference>
<dbReference type="InterPro" id="IPR009000">
    <property type="entry name" value="Transl_B-barrel_sf"/>
</dbReference>
<dbReference type="InterPro" id="IPR009001">
    <property type="entry name" value="Transl_elong_EF1A/Init_IF2_C"/>
</dbReference>
<dbReference type="InterPro" id="IPR004541">
    <property type="entry name" value="Transl_elong_EFTu/EF1A_bac/org"/>
</dbReference>
<dbReference type="InterPro" id="IPR004160">
    <property type="entry name" value="Transl_elong_EFTu/EF1A_C"/>
</dbReference>
<dbReference type="NCBIfam" id="TIGR00485">
    <property type="entry name" value="EF-Tu"/>
    <property type="match status" value="1"/>
</dbReference>
<dbReference type="NCBIfam" id="NF000766">
    <property type="entry name" value="PRK00049.1"/>
    <property type="match status" value="1"/>
</dbReference>
<dbReference type="NCBIfam" id="NF009372">
    <property type="entry name" value="PRK12735.1"/>
    <property type="match status" value="1"/>
</dbReference>
<dbReference type="NCBIfam" id="NF009373">
    <property type="entry name" value="PRK12736.1"/>
    <property type="match status" value="1"/>
</dbReference>
<dbReference type="NCBIfam" id="TIGR00231">
    <property type="entry name" value="small_GTP"/>
    <property type="match status" value="1"/>
</dbReference>
<dbReference type="PANTHER" id="PTHR43721:SF22">
    <property type="entry name" value="ELONGATION FACTOR TU, MITOCHONDRIAL"/>
    <property type="match status" value="1"/>
</dbReference>
<dbReference type="PANTHER" id="PTHR43721">
    <property type="entry name" value="ELONGATION FACTOR TU-RELATED"/>
    <property type="match status" value="1"/>
</dbReference>
<dbReference type="Pfam" id="PF00009">
    <property type="entry name" value="GTP_EFTU"/>
    <property type="match status" value="1"/>
</dbReference>
<dbReference type="Pfam" id="PF03144">
    <property type="entry name" value="GTP_EFTU_D2"/>
    <property type="match status" value="1"/>
</dbReference>
<dbReference type="Pfam" id="PF03143">
    <property type="entry name" value="GTP_EFTU_D3"/>
    <property type="match status" value="1"/>
</dbReference>
<dbReference type="PRINTS" id="PR00315">
    <property type="entry name" value="ELONGATNFCT"/>
</dbReference>
<dbReference type="SUPFAM" id="SSF50465">
    <property type="entry name" value="EF-Tu/eEF-1alpha/eIF2-gamma C-terminal domain"/>
    <property type="match status" value="1"/>
</dbReference>
<dbReference type="SUPFAM" id="SSF52540">
    <property type="entry name" value="P-loop containing nucleoside triphosphate hydrolases"/>
    <property type="match status" value="1"/>
</dbReference>
<dbReference type="SUPFAM" id="SSF50447">
    <property type="entry name" value="Translation proteins"/>
    <property type="match status" value="1"/>
</dbReference>
<dbReference type="PROSITE" id="PS00301">
    <property type="entry name" value="G_TR_1"/>
    <property type="match status" value="1"/>
</dbReference>
<dbReference type="PROSITE" id="PS51722">
    <property type="entry name" value="G_TR_2"/>
    <property type="match status" value="1"/>
</dbReference>
<keyword id="KW-0963">Cytoplasm</keyword>
<keyword id="KW-0251">Elongation factor</keyword>
<keyword id="KW-0342">GTP-binding</keyword>
<keyword id="KW-0378">Hydrolase</keyword>
<keyword id="KW-0460">Magnesium</keyword>
<keyword id="KW-0479">Metal-binding</keyword>
<keyword id="KW-0547">Nucleotide-binding</keyword>
<keyword id="KW-0648">Protein biosynthesis</keyword>
<keyword id="KW-1185">Reference proteome</keyword>
<evidence type="ECO:0000250" key="1"/>
<evidence type="ECO:0000255" key="2">
    <source>
        <dbReference type="HAMAP-Rule" id="MF_00118"/>
    </source>
</evidence>
<protein>
    <recommendedName>
        <fullName evidence="2">Elongation factor Tu</fullName>
        <shortName evidence="2">EF-Tu</shortName>
        <ecNumber evidence="2">3.6.5.3</ecNumber>
    </recommendedName>
</protein>
<gene>
    <name evidence="2" type="primary">tuf1</name>
    <name type="synonym">tufB</name>
    <name type="ordered locus">APL_1398</name>
</gene>
<gene>
    <name evidence="2" type="primary">tuf2</name>
    <name type="synonym">tufB</name>
    <name type="ordered locus">APL_1512</name>
</gene>
<proteinExistence type="inferred from homology"/>
<feature type="chain" id="PRO_0000337304" description="Elongation factor Tu">
    <location>
        <begin position="1"/>
        <end position="394"/>
    </location>
</feature>
<feature type="domain" description="tr-type G">
    <location>
        <begin position="10"/>
        <end position="204"/>
    </location>
</feature>
<feature type="region of interest" description="G1" evidence="1">
    <location>
        <begin position="19"/>
        <end position="26"/>
    </location>
</feature>
<feature type="region of interest" description="G2" evidence="1">
    <location>
        <begin position="60"/>
        <end position="64"/>
    </location>
</feature>
<feature type="region of interest" description="G3" evidence="1">
    <location>
        <begin position="81"/>
        <end position="84"/>
    </location>
</feature>
<feature type="region of interest" description="G4" evidence="1">
    <location>
        <begin position="136"/>
        <end position="139"/>
    </location>
</feature>
<feature type="region of interest" description="G5" evidence="1">
    <location>
        <begin position="174"/>
        <end position="176"/>
    </location>
</feature>
<feature type="binding site" evidence="2">
    <location>
        <begin position="19"/>
        <end position="26"/>
    </location>
    <ligand>
        <name>GTP</name>
        <dbReference type="ChEBI" id="CHEBI:37565"/>
    </ligand>
</feature>
<feature type="binding site" evidence="2">
    <location>
        <position position="26"/>
    </location>
    <ligand>
        <name>Mg(2+)</name>
        <dbReference type="ChEBI" id="CHEBI:18420"/>
    </ligand>
</feature>
<feature type="binding site" evidence="2">
    <location>
        <begin position="81"/>
        <end position="85"/>
    </location>
    <ligand>
        <name>GTP</name>
        <dbReference type="ChEBI" id="CHEBI:37565"/>
    </ligand>
</feature>
<feature type="binding site" evidence="2">
    <location>
        <begin position="136"/>
        <end position="139"/>
    </location>
    <ligand>
        <name>GTP</name>
        <dbReference type="ChEBI" id="CHEBI:37565"/>
    </ligand>
</feature>
<name>EFTU_ACTP2</name>
<sequence>MSKEKFERTKPHVNVGTIGHVDHGKTTLTAAITTVLSKHFGGAARAFDQIDNAPEEKARGITINTSHVEYDTETRHYAHVDCPGHADYVKNMITGAAQMDGAILVVAATDGPMPQTREHILLGRQVGVPYIIVFLNKCDMVDDEELLELVEMEVRELLSQYDFPGDDTPIVRGSALQALNGVPEWEEKILELAHHLDTYIPEPERAIDKPFLLPIEDVFSISGRGTVVTGRVERGIIKSGEEVEIVGIKETTKTTVTGVEMFRKLLDEGRAGENVGALLRGTKREEIERGQVLAKPGTITPHTDFESEVYVLSKEEGGRHTPFFKGYRPQFYFRTTDVTGTIELPEGVEMVMPGDNIKMTVSLIHPIAMDEGLRFAIREGGRTVGAGVVAKIIK</sequence>